<organism>
    <name type="scientific">Shewanella halifaxensis (strain HAW-EB4)</name>
    <dbReference type="NCBI Taxonomy" id="458817"/>
    <lineage>
        <taxon>Bacteria</taxon>
        <taxon>Pseudomonadati</taxon>
        <taxon>Pseudomonadota</taxon>
        <taxon>Gammaproteobacteria</taxon>
        <taxon>Alteromonadales</taxon>
        <taxon>Shewanellaceae</taxon>
        <taxon>Shewanella</taxon>
    </lineage>
</organism>
<name>RS18_SHEHH</name>
<sequence length="75" mass="8902">MARYFRRRKFCRFTAEGVTEIDYKDIVTLKNYITESGKIVPSRITGTNAKYQRQLARAIKRARYLSLLPYTDLHQ</sequence>
<protein>
    <recommendedName>
        <fullName evidence="1">Small ribosomal subunit protein bS18</fullName>
    </recommendedName>
    <alternativeName>
        <fullName evidence="2">30S ribosomal protein S18</fullName>
    </alternativeName>
</protein>
<accession>B0TUU7</accession>
<gene>
    <name evidence="1" type="primary">rpsR</name>
    <name type="ordered locus">Shal_3673</name>
</gene>
<dbReference type="EMBL" id="CP000931">
    <property type="protein sequence ID" value="ABZ78214.1"/>
    <property type="molecule type" value="Genomic_DNA"/>
</dbReference>
<dbReference type="RefSeq" id="WP_005497284.1">
    <property type="nucleotide sequence ID" value="NC_010334.1"/>
</dbReference>
<dbReference type="SMR" id="B0TUU7"/>
<dbReference type="STRING" id="458817.Shal_3673"/>
<dbReference type="KEGG" id="shl:Shal_3673"/>
<dbReference type="eggNOG" id="COG0238">
    <property type="taxonomic scope" value="Bacteria"/>
</dbReference>
<dbReference type="HOGENOM" id="CLU_148710_2_3_6"/>
<dbReference type="OrthoDB" id="9812008at2"/>
<dbReference type="Proteomes" id="UP000001317">
    <property type="component" value="Chromosome"/>
</dbReference>
<dbReference type="GO" id="GO:0022627">
    <property type="term" value="C:cytosolic small ribosomal subunit"/>
    <property type="evidence" value="ECO:0007669"/>
    <property type="project" value="TreeGrafter"/>
</dbReference>
<dbReference type="GO" id="GO:0070181">
    <property type="term" value="F:small ribosomal subunit rRNA binding"/>
    <property type="evidence" value="ECO:0007669"/>
    <property type="project" value="TreeGrafter"/>
</dbReference>
<dbReference type="GO" id="GO:0003735">
    <property type="term" value="F:structural constituent of ribosome"/>
    <property type="evidence" value="ECO:0007669"/>
    <property type="project" value="InterPro"/>
</dbReference>
<dbReference type="GO" id="GO:0006412">
    <property type="term" value="P:translation"/>
    <property type="evidence" value="ECO:0007669"/>
    <property type="project" value="UniProtKB-UniRule"/>
</dbReference>
<dbReference type="FunFam" id="4.10.640.10:FF:000001">
    <property type="entry name" value="30S ribosomal protein S18"/>
    <property type="match status" value="1"/>
</dbReference>
<dbReference type="Gene3D" id="4.10.640.10">
    <property type="entry name" value="Ribosomal protein S18"/>
    <property type="match status" value="1"/>
</dbReference>
<dbReference type="HAMAP" id="MF_00270">
    <property type="entry name" value="Ribosomal_bS18"/>
    <property type="match status" value="1"/>
</dbReference>
<dbReference type="InterPro" id="IPR001648">
    <property type="entry name" value="Ribosomal_bS18"/>
</dbReference>
<dbReference type="InterPro" id="IPR018275">
    <property type="entry name" value="Ribosomal_bS18_CS"/>
</dbReference>
<dbReference type="InterPro" id="IPR036870">
    <property type="entry name" value="Ribosomal_bS18_sf"/>
</dbReference>
<dbReference type="NCBIfam" id="TIGR00165">
    <property type="entry name" value="S18"/>
    <property type="match status" value="1"/>
</dbReference>
<dbReference type="PANTHER" id="PTHR13479">
    <property type="entry name" value="30S RIBOSOMAL PROTEIN S18"/>
    <property type="match status" value="1"/>
</dbReference>
<dbReference type="PANTHER" id="PTHR13479:SF40">
    <property type="entry name" value="SMALL RIBOSOMAL SUBUNIT PROTEIN BS18M"/>
    <property type="match status" value="1"/>
</dbReference>
<dbReference type="Pfam" id="PF01084">
    <property type="entry name" value="Ribosomal_S18"/>
    <property type="match status" value="1"/>
</dbReference>
<dbReference type="PRINTS" id="PR00974">
    <property type="entry name" value="RIBOSOMALS18"/>
</dbReference>
<dbReference type="SUPFAM" id="SSF46911">
    <property type="entry name" value="Ribosomal protein S18"/>
    <property type="match status" value="1"/>
</dbReference>
<dbReference type="PROSITE" id="PS00057">
    <property type="entry name" value="RIBOSOMAL_S18"/>
    <property type="match status" value="1"/>
</dbReference>
<proteinExistence type="inferred from homology"/>
<feature type="chain" id="PRO_1000078713" description="Small ribosomal subunit protein bS18">
    <location>
        <begin position="1"/>
        <end position="75"/>
    </location>
</feature>
<keyword id="KW-0687">Ribonucleoprotein</keyword>
<keyword id="KW-0689">Ribosomal protein</keyword>
<keyword id="KW-0694">RNA-binding</keyword>
<keyword id="KW-0699">rRNA-binding</keyword>
<reference key="1">
    <citation type="submission" date="2008-01" db="EMBL/GenBank/DDBJ databases">
        <title>Complete sequence of Shewanella halifaxensis HAW-EB4.</title>
        <authorList>
            <consortium name="US DOE Joint Genome Institute"/>
            <person name="Copeland A."/>
            <person name="Lucas S."/>
            <person name="Lapidus A."/>
            <person name="Glavina del Rio T."/>
            <person name="Dalin E."/>
            <person name="Tice H."/>
            <person name="Bruce D."/>
            <person name="Goodwin L."/>
            <person name="Pitluck S."/>
            <person name="Sims D."/>
            <person name="Brettin T."/>
            <person name="Detter J.C."/>
            <person name="Han C."/>
            <person name="Kuske C.R."/>
            <person name="Schmutz J."/>
            <person name="Larimer F."/>
            <person name="Land M."/>
            <person name="Hauser L."/>
            <person name="Kyrpides N."/>
            <person name="Kim E."/>
            <person name="Zhao J.-S."/>
            <person name="Richardson P."/>
        </authorList>
    </citation>
    <scope>NUCLEOTIDE SEQUENCE [LARGE SCALE GENOMIC DNA]</scope>
    <source>
        <strain>HAW-EB4</strain>
    </source>
</reference>
<evidence type="ECO:0000255" key="1">
    <source>
        <dbReference type="HAMAP-Rule" id="MF_00270"/>
    </source>
</evidence>
<evidence type="ECO:0000305" key="2"/>
<comment type="function">
    <text evidence="1">Binds as a heterodimer with protein bS6 to the central domain of the 16S rRNA, where it helps stabilize the platform of the 30S subunit.</text>
</comment>
<comment type="subunit">
    <text evidence="1">Part of the 30S ribosomal subunit. Forms a tight heterodimer with protein bS6.</text>
</comment>
<comment type="similarity">
    <text evidence="1">Belongs to the bacterial ribosomal protein bS18 family.</text>
</comment>